<gene>
    <name evidence="3" type="primary">linX</name>
    <name evidence="5" type="ordered locus">SJA_C1-18580</name>
</gene>
<proteinExistence type="evidence at protein level"/>
<organism>
    <name type="scientific">Sphingobium indicum (strain DSM 16413 / CCM 7287 / MTCC 6362 / UT26 / NBRC 101211 / UT26S)</name>
    <name type="common">Sphingobium japonicum</name>
    <dbReference type="NCBI Taxonomy" id="452662"/>
    <lineage>
        <taxon>Bacteria</taxon>
        <taxon>Pseudomonadati</taxon>
        <taxon>Pseudomonadota</taxon>
        <taxon>Alphaproteobacteria</taxon>
        <taxon>Sphingomonadales</taxon>
        <taxon>Sphingomonadaceae</taxon>
        <taxon>Sphingobium</taxon>
    </lineage>
</organism>
<feature type="chain" id="PRO_0000054720" description="2,5-dichloro-2,5-cyclohexadiene-1,4-diol dehydrogenase LinX">
    <location>
        <begin position="1"/>
        <end position="250"/>
    </location>
</feature>
<feature type="active site" description="Proton acceptor" evidence="1">
    <location>
        <position position="156"/>
    </location>
</feature>
<feature type="binding site" evidence="1">
    <location>
        <position position="38"/>
    </location>
    <ligand>
        <name>NAD(+)</name>
        <dbReference type="ChEBI" id="CHEBI:57540"/>
    </ligand>
</feature>
<feature type="binding site" evidence="1">
    <location>
        <position position="64"/>
    </location>
    <ligand>
        <name>NAD(+)</name>
        <dbReference type="ChEBI" id="CHEBI:57540"/>
    </ligand>
</feature>
<feature type="binding site" evidence="1">
    <location>
        <position position="65"/>
    </location>
    <ligand>
        <name>NAD(+)</name>
        <dbReference type="ChEBI" id="CHEBI:57540"/>
    </ligand>
</feature>
<feature type="binding site" evidence="1">
    <location>
        <position position="156"/>
    </location>
    <ligand>
        <name>NAD(+)</name>
        <dbReference type="ChEBI" id="CHEBI:57540"/>
    </ligand>
</feature>
<feature type="binding site" evidence="1">
    <location>
        <position position="160"/>
    </location>
    <ligand>
        <name>NAD(+)</name>
        <dbReference type="ChEBI" id="CHEBI:57540"/>
    </ligand>
</feature>
<feature type="binding site" evidence="1">
    <location>
        <position position="191"/>
    </location>
    <ligand>
        <name>NAD(+)</name>
        <dbReference type="ChEBI" id="CHEBI:57540"/>
    </ligand>
</feature>
<feature type="binding site" evidence="1">
    <location>
        <position position="194"/>
    </location>
    <ligand>
        <name>NAD(+)</name>
        <dbReference type="ChEBI" id="CHEBI:57540"/>
    </ligand>
</feature>
<feature type="sequence conflict" description="In Ref. 1; BAA04939." evidence="4" ref="1">
    <original>EA</original>
    <variation>DG</variation>
    <location>
        <begin position="80"/>
        <end position="81"/>
    </location>
</feature>
<reference key="1">
    <citation type="journal article" date="1994" name="J. Bacteriol.">
        <title>Cloning and sequencing of a 2,5-dichloro-2,5-cyclohexadiene-1,4-diol dehydrogenase gene involved in the degradation of gamma-hexachlorocyclohexane in Pseudomonas paucimobilis.</title>
        <authorList>
            <person name="Nagata Y."/>
            <person name="Ohtomo R."/>
            <person name="Miyauchi K."/>
            <person name="Fukuda M."/>
            <person name="Yano K."/>
            <person name="Takagi M."/>
        </authorList>
    </citation>
    <scope>NUCLEOTIDE SEQUENCE [GENOMIC DNA]</scope>
    <scope>FUNCTION</scope>
    <scope>CATALYTIC ACTIVITY</scope>
    <source>
        <strain>DSM 16413 / CCM 7287 / MTCC 6362 / UT26 / NBRC 101211 / UT26S</strain>
    </source>
</reference>
<reference key="2">
    <citation type="journal article" date="2010" name="J. Bacteriol.">
        <title>Complete genome sequence of the representative gamma-hexachlorocyclohexane-degrading bacterium Sphingobium japonicum UT26.</title>
        <authorList>
            <person name="Nagata Y."/>
            <person name="Ohtsubo Y."/>
            <person name="Endo R."/>
            <person name="Ichikawa N."/>
            <person name="Ankai A."/>
            <person name="Oguchi A."/>
            <person name="Fukui S."/>
            <person name="Fujita N."/>
            <person name="Tsuda M."/>
        </authorList>
    </citation>
    <scope>NUCLEOTIDE SEQUENCE [LARGE SCALE GENOMIC DNA]</scope>
    <source>
        <strain>DSM 16413 / CCM 7287 / MTCC 6362 / UT26 / NBRC 101211 / UT26S</strain>
    </source>
</reference>
<keyword id="KW-0520">NAD</keyword>
<keyword id="KW-0560">Oxidoreductase</keyword>
<keyword id="KW-1185">Reference proteome</keyword>
<protein>
    <recommendedName>
        <fullName evidence="3">2,5-dichloro-2,5-cyclohexadiene-1,4-diol dehydrogenase LinX</fullName>
        <shortName evidence="3">2,5-DDOL dehydrogenase</shortName>
        <ecNumber evidence="2">1.1.1.-</ecNumber>
    </recommendedName>
</protein>
<accession>D4Z260</accession>
<accession>P50198</accession>
<dbReference type="EC" id="1.1.1.-" evidence="2"/>
<dbReference type="EMBL" id="D23722">
    <property type="protein sequence ID" value="BAA04939.1"/>
    <property type="molecule type" value="Genomic_DNA"/>
</dbReference>
<dbReference type="EMBL" id="AP010803">
    <property type="protein sequence ID" value="BAI96692.1"/>
    <property type="molecule type" value="Genomic_DNA"/>
</dbReference>
<dbReference type="RefSeq" id="WP_007682029.1">
    <property type="nucleotide sequence ID" value="NC_014006.1"/>
</dbReference>
<dbReference type="SMR" id="D4Z260"/>
<dbReference type="STRING" id="452662.SJA_C1-18580"/>
<dbReference type="GeneID" id="29273459"/>
<dbReference type="KEGG" id="sjp:SJA_C1-18580"/>
<dbReference type="eggNOG" id="COG1028">
    <property type="taxonomic scope" value="Bacteria"/>
</dbReference>
<dbReference type="HOGENOM" id="CLU_010194_1_0_5"/>
<dbReference type="Proteomes" id="UP000007753">
    <property type="component" value="Chromosome 1"/>
</dbReference>
<dbReference type="GO" id="GO:0018502">
    <property type="term" value="F:2,5-dichloro-2,5-cyclohexadiene-1,4-diol dehydrogenase activity"/>
    <property type="evidence" value="ECO:0007669"/>
    <property type="project" value="RHEA"/>
</dbReference>
<dbReference type="FunFam" id="3.40.50.720:FF:000084">
    <property type="entry name" value="Short-chain dehydrogenase reductase"/>
    <property type="match status" value="1"/>
</dbReference>
<dbReference type="Gene3D" id="3.40.50.720">
    <property type="entry name" value="NAD(P)-binding Rossmann-like Domain"/>
    <property type="match status" value="1"/>
</dbReference>
<dbReference type="InterPro" id="IPR036291">
    <property type="entry name" value="NAD(P)-bd_dom_sf"/>
</dbReference>
<dbReference type="InterPro" id="IPR020904">
    <property type="entry name" value="Sc_DH/Rdtase_CS"/>
</dbReference>
<dbReference type="InterPro" id="IPR002347">
    <property type="entry name" value="SDR_fam"/>
</dbReference>
<dbReference type="NCBIfam" id="NF005559">
    <property type="entry name" value="PRK07231.1"/>
    <property type="match status" value="1"/>
</dbReference>
<dbReference type="PANTHER" id="PTHR43639">
    <property type="entry name" value="OXIDOREDUCTASE, SHORT-CHAIN DEHYDROGENASE/REDUCTASE FAMILY (AFU_ORTHOLOGUE AFUA_5G02870)"/>
    <property type="match status" value="1"/>
</dbReference>
<dbReference type="PANTHER" id="PTHR43639:SF1">
    <property type="entry name" value="SHORT-CHAIN DEHYDROGENASE_REDUCTASE FAMILY PROTEIN"/>
    <property type="match status" value="1"/>
</dbReference>
<dbReference type="Pfam" id="PF13561">
    <property type="entry name" value="adh_short_C2"/>
    <property type="match status" value="1"/>
</dbReference>
<dbReference type="PRINTS" id="PR00081">
    <property type="entry name" value="GDHRDH"/>
</dbReference>
<dbReference type="PRINTS" id="PR00080">
    <property type="entry name" value="SDRFAMILY"/>
</dbReference>
<dbReference type="SUPFAM" id="SSF51735">
    <property type="entry name" value="NAD(P)-binding Rossmann-fold domains"/>
    <property type="match status" value="1"/>
</dbReference>
<dbReference type="PROSITE" id="PS00061">
    <property type="entry name" value="ADH_SHORT"/>
    <property type="match status" value="1"/>
</dbReference>
<sequence>MANRLAGKVALITGGASGLGAAQAKRFAEEGAKVVIGDLNEEMAKGVVAEIRAAGGDALFIRLDVTDAASWNNAIAAAVEAFGGLTTLSNTAGIIHPGGFEEESIEGWNKMVAVNQTAIFLGIKAAIPELVKSGNGSIINISSLIGMFPTAGNASYCATKAAVRIMSKAAALEFVDRGVRVNTIVPGGMNTPITANVPPDVLKQQTSQIPMGKLGDPIDIANGALFLASDEAKYITGVDLPIDGGWSVGV</sequence>
<evidence type="ECO:0000250" key="1">
    <source>
        <dbReference type="UniProtKB" id="P9WGT1"/>
    </source>
</evidence>
<evidence type="ECO:0000269" key="2">
    <source>
    </source>
</evidence>
<evidence type="ECO:0000303" key="3">
    <source>
    </source>
</evidence>
<evidence type="ECO:0000305" key="4"/>
<evidence type="ECO:0000312" key="5">
    <source>
        <dbReference type="EMBL" id="BAI96692.1"/>
    </source>
</evidence>
<comment type="function">
    <text evidence="2">Catalyzes the degradation of 2,5-dichloro-2,5-cyclohexadiene-1,4-diol (2,5-DDOL) into 2,5-dichlorohydroquinone (2,5-DCHQ) in vitro. LinX appears not to be involved in gamma-hexachlorocyclohexane (gamma-HCH) degradation pathway, in contrast to LinC which has the same enzymatic activity.</text>
</comment>
<comment type="catalytic activity">
    <reaction evidence="2">
        <text>2,5-dichlorocyclohexa-2,5-dien-1,4-diol + NAD(+) = 2,5-dichlorohydroquinone + NADH + H(+)</text>
        <dbReference type="Rhea" id="RHEA:15741"/>
        <dbReference type="ChEBI" id="CHEBI:15378"/>
        <dbReference type="ChEBI" id="CHEBI:27545"/>
        <dbReference type="ChEBI" id="CHEBI:28975"/>
        <dbReference type="ChEBI" id="CHEBI:57540"/>
        <dbReference type="ChEBI" id="CHEBI:57945"/>
    </reaction>
</comment>
<comment type="similarity">
    <text evidence="4">Belongs to the short-chain dehydrogenases/reductases (SDR) family.</text>
</comment>
<name>LINX_SPHIU</name>